<gene>
    <name evidence="1" type="primary">ATP5MG</name>
    <name type="synonym">ATP5L</name>
</gene>
<reference key="1">
    <citation type="submission" date="2004-11" db="EMBL/GenBank/DDBJ databases">
        <authorList>
            <consortium name="The German cDNA consortium"/>
        </authorList>
    </citation>
    <scope>NUCLEOTIDE SEQUENCE [LARGE SCALE MRNA]</scope>
    <source>
        <tissue>Heart</tissue>
    </source>
</reference>
<sequence>MAQFVRNLVEKTPALVNAAVTYSKPRLATFWYYAKVELVPPTPAEIPRAIQGLKKIVNSAQTGSFKQLTVKEAVLNGLVATEVLMWFYVGEIIGKRGIIGYDV</sequence>
<dbReference type="EMBL" id="CR857188">
    <property type="protein sequence ID" value="CAH89487.1"/>
    <property type="molecule type" value="mRNA"/>
</dbReference>
<dbReference type="RefSeq" id="NP_001124640.1">
    <property type="nucleotide sequence ID" value="NM_001131168.2"/>
</dbReference>
<dbReference type="SMR" id="Q5RFH0"/>
<dbReference type="STRING" id="9601.ENSPPYP00000004504"/>
<dbReference type="GeneID" id="100171481"/>
<dbReference type="KEGG" id="pon:100171481"/>
<dbReference type="CTD" id="10632"/>
<dbReference type="eggNOG" id="KOG4103">
    <property type="taxonomic scope" value="Eukaryota"/>
</dbReference>
<dbReference type="InParanoid" id="Q5RFH0"/>
<dbReference type="OrthoDB" id="437at2759"/>
<dbReference type="Proteomes" id="UP000001595">
    <property type="component" value="Unplaced"/>
</dbReference>
<dbReference type="GO" id="GO:0005743">
    <property type="term" value="C:mitochondrial inner membrane"/>
    <property type="evidence" value="ECO:0007669"/>
    <property type="project" value="UniProtKB-SubCell"/>
</dbReference>
<dbReference type="GO" id="GO:0045259">
    <property type="term" value="C:proton-transporting ATP synthase complex"/>
    <property type="evidence" value="ECO:0000250"/>
    <property type="project" value="UniProtKB"/>
</dbReference>
<dbReference type="GO" id="GO:0015078">
    <property type="term" value="F:proton transmembrane transporter activity"/>
    <property type="evidence" value="ECO:0007669"/>
    <property type="project" value="InterPro"/>
</dbReference>
<dbReference type="GO" id="GO:0015986">
    <property type="term" value="P:proton motive force-driven ATP synthesis"/>
    <property type="evidence" value="ECO:0007669"/>
    <property type="project" value="InterPro"/>
</dbReference>
<dbReference type="InterPro" id="IPR006808">
    <property type="entry name" value="ATP_synth_F0_gsu_mt"/>
</dbReference>
<dbReference type="InterPro" id="IPR016702">
    <property type="entry name" value="ATP_synth_su_G_mt_met"/>
</dbReference>
<dbReference type="PANTHER" id="PTHR12386">
    <property type="entry name" value="ATP SYNTHASE SUBUNIT"/>
    <property type="match status" value="1"/>
</dbReference>
<dbReference type="Pfam" id="PF04718">
    <property type="entry name" value="ATP-synt_G"/>
    <property type="match status" value="1"/>
</dbReference>
<dbReference type="PIRSF" id="PIRSF017835">
    <property type="entry name" value="ATP-synth_g_mitoch_animal"/>
    <property type="match status" value="1"/>
</dbReference>
<evidence type="ECO:0000250" key="1">
    <source>
        <dbReference type="UniProtKB" id="O75964"/>
    </source>
</evidence>
<evidence type="ECO:0000250" key="2">
    <source>
        <dbReference type="UniProtKB" id="P19483"/>
    </source>
</evidence>
<evidence type="ECO:0000250" key="3">
    <source>
        <dbReference type="UniProtKB" id="Q9CPQ8"/>
    </source>
</evidence>
<evidence type="ECO:0000305" key="4"/>
<protein>
    <recommendedName>
        <fullName evidence="1">ATP synthase F(0) complex subunit g, mitochondrial</fullName>
        <shortName>ATPase subunit g</shortName>
    </recommendedName>
    <alternativeName>
        <fullName evidence="4">ATP synthase membrane subunit g</fullName>
    </alternativeName>
</protein>
<accession>Q5RFH0</accession>
<keyword id="KW-0007">Acetylation</keyword>
<keyword id="KW-0066">ATP synthesis</keyword>
<keyword id="KW-0138">CF(0)</keyword>
<keyword id="KW-0375">Hydrogen ion transport</keyword>
<keyword id="KW-0406">Ion transport</keyword>
<keyword id="KW-0472">Membrane</keyword>
<keyword id="KW-0496">Mitochondrion</keyword>
<keyword id="KW-0999">Mitochondrion inner membrane</keyword>
<keyword id="KW-1185">Reference proteome</keyword>
<keyword id="KW-0813">Transport</keyword>
<comment type="function">
    <text evidence="1 2">Subunit g, of the mitochondrial membrane ATP synthase complex (F(1)F(0) ATP synthase or Complex V) that produces ATP from ADP in the presence of a proton gradient across the membrane which is generated by electron transport complexes of the respiratory chain. ATP synthase complex consist of a soluble F(1) head domain - the catalytic core - and a membrane F(1) domain - the membrane proton channel. These two domains are linked by a central stalk rotating inside the F(1) region and a stationary peripheral stalk. During catalysis, ATP synthesis in the catalytic domain of F(1) is coupled via a rotary mechanism of the central stalk subunits to proton translocation (By similarity). In vivo, can only synthesize ATP although its ATP hydrolase activity can be activated artificially in vitro (By similarity). Part of the complex F(0) domain (By similarity).</text>
</comment>
<comment type="subunit">
    <text evidence="1">Component of the ATP synthase complex composed at least of ATP5F1A/subunit alpha, ATP5F1B/subunit beta, ATP5MC1/subunit c (homooctomer), MT-ATP6/subunit a, MT-ATP8/subunit 8, ATP5ME/subunit e, ATP5MF/subunit f, ATP5MG/subunit g, ATP5MK/subunit k, ATP5MJ/subunit j, ATP5F1C/subunit gamma, ATP5F1D/subunit delta, ATP5F1E/subunit epsilon, ATP5PF/subunit F6, ATP5PB/subunit b, ATP5PD/subunit d, ATP5PO/subunit OSCP. ATP synthase complex consists of a soluble F(1) head domain (subunits alpha(3) and beta(3)) - the catalytic core - and a membrane F(0) domain - the membrane proton channel (subunits c, a, 8, e, f, g, k and j). These two domains are linked by a central stalk (subunits gamma, delta, and epsilon) rotating inside the F1 region and a stationary peripheral stalk (subunits F6, b, d, and OSCP).</text>
</comment>
<comment type="subcellular location">
    <subcellularLocation>
        <location>Mitochondrion</location>
    </subcellularLocation>
    <subcellularLocation>
        <location>Mitochondrion inner membrane</location>
    </subcellularLocation>
</comment>
<comment type="similarity">
    <text evidence="4">Belongs to the ATPase g subunit family.</text>
</comment>
<name>ATP5L_PONAB</name>
<organism>
    <name type="scientific">Pongo abelii</name>
    <name type="common">Sumatran orangutan</name>
    <name type="synonym">Pongo pygmaeus abelii</name>
    <dbReference type="NCBI Taxonomy" id="9601"/>
    <lineage>
        <taxon>Eukaryota</taxon>
        <taxon>Metazoa</taxon>
        <taxon>Chordata</taxon>
        <taxon>Craniata</taxon>
        <taxon>Vertebrata</taxon>
        <taxon>Euteleostomi</taxon>
        <taxon>Mammalia</taxon>
        <taxon>Eutheria</taxon>
        <taxon>Euarchontoglires</taxon>
        <taxon>Primates</taxon>
        <taxon>Haplorrhini</taxon>
        <taxon>Catarrhini</taxon>
        <taxon>Hominidae</taxon>
        <taxon>Pongo</taxon>
    </lineage>
</organism>
<proteinExistence type="inferred from homology"/>
<feature type="initiator methionine" description="Removed" evidence="1">
    <location>
        <position position="1"/>
    </location>
</feature>
<feature type="chain" id="PRO_0000071693" description="ATP synthase F(0) complex subunit g, mitochondrial">
    <location>
        <begin position="2"/>
        <end position="103"/>
    </location>
</feature>
<feature type="modified residue" description="N-acetylalanine" evidence="1">
    <location>
        <position position="2"/>
    </location>
</feature>
<feature type="modified residue" description="N6-acetyllysine" evidence="3">
    <location>
        <position position="11"/>
    </location>
</feature>
<feature type="modified residue" description="N6-acetyllysine" evidence="1">
    <location>
        <position position="24"/>
    </location>
</feature>
<feature type="modified residue" description="N6-acetyllysine" evidence="3">
    <location>
        <position position="35"/>
    </location>
</feature>
<feature type="modified residue" description="N6-acetyllysine" evidence="3">
    <location>
        <position position="54"/>
    </location>
</feature>